<comment type="function">
    <text evidence="1">Converts heme B (protoheme IX) to heme O by substitution of the vinyl group on carbon 2 of heme B porphyrin ring with a hydroxyethyl farnesyl side group.</text>
</comment>
<comment type="catalytic activity">
    <reaction evidence="1">
        <text>heme b + (2E,6E)-farnesyl diphosphate + H2O = Fe(II)-heme o + diphosphate</text>
        <dbReference type="Rhea" id="RHEA:28070"/>
        <dbReference type="ChEBI" id="CHEBI:15377"/>
        <dbReference type="ChEBI" id="CHEBI:33019"/>
        <dbReference type="ChEBI" id="CHEBI:60344"/>
        <dbReference type="ChEBI" id="CHEBI:60530"/>
        <dbReference type="ChEBI" id="CHEBI:175763"/>
        <dbReference type="EC" id="2.5.1.141"/>
    </reaction>
</comment>
<comment type="pathway">
    <text evidence="1">Porphyrin-containing compound metabolism; heme O biosynthesis; heme O from protoheme: step 1/1.</text>
</comment>
<comment type="subcellular location">
    <subcellularLocation>
        <location evidence="1">Cell inner membrane</location>
        <topology evidence="1">Multi-pass membrane protein</topology>
    </subcellularLocation>
</comment>
<comment type="miscellaneous">
    <text evidence="1">Carbon 2 of the heme B porphyrin ring is defined according to the Fischer nomenclature.</text>
</comment>
<comment type="similarity">
    <text evidence="1">Belongs to the UbiA prenyltransferase family. Protoheme IX farnesyltransferase subfamily.</text>
</comment>
<keyword id="KW-0997">Cell inner membrane</keyword>
<keyword id="KW-1003">Cell membrane</keyword>
<keyword id="KW-0350">Heme biosynthesis</keyword>
<keyword id="KW-0472">Membrane</keyword>
<keyword id="KW-0808">Transferase</keyword>
<keyword id="KW-0812">Transmembrane</keyword>
<keyword id="KW-1133">Transmembrane helix</keyword>
<feature type="chain" id="PRO_0000326965" description="Protoheme IX farnesyltransferase 2">
    <location>
        <begin position="1"/>
        <end position="288"/>
    </location>
</feature>
<feature type="transmembrane region" description="Helical" evidence="1">
    <location>
        <begin position="8"/>
        <end position="28"/>
    </location>
</feature>
<feature type="transmembrane region" description="Helical" evidence="1">
    <location>
        <begin position="36"/>
        <end position="56"/>
    </location>
</feature>
<feature type="transmembrane region" description="Helical" evidence="1">
    <location>
        <begin position="85"/>
        <end position="105"/>
    </location>
</feature>
<feature type="transmembrane region" description="Helical" evidence="1">
    <location>
        <begin position="108"/>
        <end position="128"/>
    </location>
</feature>
<feature type="transmembrane region" description="Helical" evidence="1">
    <location>
        <begin position="131"/>
        <end position="151"/>
    </location>
</feature>
<feature type="transmembrane region" description="Helical" evidence="1">
    <location>
        <begin position="152"/>
        <end position="172"/>
    </location>
</feature>
<feature type="transmembrane region" description="Helical" evidence="1">
    <location>
        <begin position="211"/>
        <end position="231"/>
    </location>
</feature>
<feature type="transmembrane region" description="Helical" evidence="1">
    <location>
        <begin position="233"/>
        <end position="252"/>
    </location>
</feature>
<feature type="transmembrane region" description="Helical" evidence="1">
    <location>
        <begin position="267"/>
        <end position="287"/>
    </location>
</feature>
<proteinExistence type="inferred from homology"/>
<dbReference type="EC" id="2.5.1.141" evidence="1"/>
<dbReference type="EMBL" id="BA000032">
    <property type="protein sequence ID" value="BAC61974.1"/>
    <property type="molecule type" value="Genomic_DNA"/>
</dbReference>
<dbReference type="RefSeq" id="NP_800141.1">
    <property type="nucleotide sequence ID" value="NC_004605.1"/>
</dbReference>
<dbReference type="SMR" id="Q87IH5"/>
<dbReference type="KEGG" id="vpa:VPA0631"/>
<dbReference type="PATRIC" id="fig|223926.6.peg.3570"/>
<dbReference type="eggNOG" id="COG0109">
    <property type="taxonomic scope" value="Bacteria"/>
</dbReference>
<dbReference type="HOGENOM" id="CLU_029631_0_0_6"/>
<dbReference type="UniPathway" id="UPA00834">
    <property type="reaction ID" value="UER00712"/>
</dbReference>
<dbReference type="Proteomes" id="UP000002493">
    <property type="component" value="Chromosome 2"/>
</dbReference>
<dbReference type="GO" id="GO:0005886">
    <property type="term" value="C:plasma membrane"/>
    <property type="evidence" value="ECO:0007669"/>
    <property type="project" value="UniProtKB-SubCell"/>
</dbReference>
<dbReference type="GO" id="GO:0008495">
    <property type="term" value="F:protoheme IX farnesyltransferase activity"/>
    <property type="evidence" value="ECO:0007669"/>
    <property type="project" value="UniProtKB-UniRule"/>
</dbReference>
<dbReference type="GO" id="GO:0048034">
    <property type="term" value="P:heme O biosynthetic process"/>
    <property type="evidence" value="ECO:0007669"/>
    <property type="project" value="UniProtKB-UniRule"/>
</dbReference>
<dbReference type="CDD" id="cd13957">
    <property type="entry name" value="PT_UbiA_Cox10"/>
    <property type="match status" value="1"/>
</dbReference>
<dbReference type="FunFam" id="1.10.357.140:FF:000001">
    <property type="entry name" value="Protoheme IX farnesyltransferase"/>
    <property type="match status" value="1"/>
</dbReference>
<dbReference type="Gene3D" id="1.10.357.140">
    <property type="entry name" value="UbiA prenyltransferase"/>
    <property type="match status" value="1"/>
</dbReference>
<dbReference type="HAMAP" id="MF_00154">
    <property type="entry name" value="CyoE_CtaB"/>
    <property type="match status" value="1"/>
</dbReference>
<dbReference type="InterPro" id="IPR006369">
    <property type="entry name" value="Protohaem_IX_farnesylTrfase"/>
</dbReference>
<dbReference type="InterPro" id="IPR000537">
    <property type="entry name" value="UbiA_prenyltransferase"/>
</dbReference>
<dbReference type="InterPro" id="IPR030470">
    <property type="entry name" value="UbiA_prenylTrfase_CS"/>
</dbReference>
<dbReference type="InterPro" id="IPR044878">
    <property type="entry name" value="UbiA_sf"/>
</dbReference>
<dbReference type="NCBIfam" id="TIGR01473">
    <property type="entry name" value="cyoE_ctaB"/>
    <property type="match status" value="1"/>
</dbReference>
<dbReference type="NCBIfam" id="NF003348">
    <property type="entry name" value="PRK04375.1-1"/>
    <property type="match status" value="1"/>
</dbReference>
<dbReference type="PANTHER" id="PTHR43448">
    <property type="entry name" value="PROTOHEME IX FARNESYLTRANSFERASE, MITOCHONDRIAL"/>
    <property type="match status" value="1"/>
</dbReference>
<dbReference type="PANTHER" id="PTHR43448:SF2">
    <property type="entry name" value="PROTOHEME IX FARNESYLTRANSFERASE, MITOCHONDRIAL"/>
    <property type="match status" value="1"/>
</dbReference>
<dbReference type="Pfam" id="PF01040">
    <property type="entry name" value="UbiA"/>
    <property type="match status" value="1"/>
</dbReference>
<dbReference type="PROSITE" id="PS00943">
    <property type="entry name" value="UBIA"/>
    <property type="match status" value="1"/>
</dbReference>
<protein>
    <recommendedName>
        <fullName evidence="1">Protoheme IX farnesyltransferase 2</fullName>
        <ecNumber evidence="1">2.5.1.141</ecNumber>
    </recommendedName>
    <alternativeName>
        <fullName evidence="1">Heme B farnesyltransferase 2</fullName>
    </alternativeName>
    <alternativeName>
        <fullName evidence="1">Heme O synthase 2</fullName>
    </alternativeName>
</protein>
<sequence length="288" mass="31559">MLKSYLSITKPGIIFGNLISVAAGFFLAAKSEPASLMLFLTTLAGVGLVIASGCVVNNIFDRDIDQKMARTQNRETVKGNINIDVAFVYALAMLLLGTALLFQLVNPLSAVVVLLGYVYYVFFYTMWYKRNSVYGTLVGSISGAVPPLVGYLAVTNFISLEAILLFTMFCLWQMPHSYAIAMFRMQDYREAGIPVLPVKDGIHKAHRHMKAYVVAFGAVSLGLFLLGEAGYEYLAVAAVVCLMWTKVTFRSIDESNYVVWSKSVFKVSLLVVMGISGVLGVELIPLAL</sequence>
<organism>
    <name type="scientific">Vibrio parahaemolyticus serotype O3:K6 (strain RIMD 2210633)</name>
    <dbReference type="NCBI Taxonomy" id="223926"/>
    <lineage>
        <taxon>Bacteria</taxon>
        <taxon>Pseudomonadati</taxon>
        <taxon>Pseudomonadota</taxon>
        <taxon>Gammaproteobacteria</taxon>
        <taxon>Vibrionales</taxon>
        <taxon>Vibrionaceae</taxon>
        <taxon>Vibrio</taxon>
    </lineage>
</organism>
<gene>
    <name evidence="1" type="primary">cyoE2</name>
    <name type="ordered locus">VPA0631</name>
</gene>
<reference key="1">
    <citation type="journal article" date="2003" name="Lancet">
        <title>Genome sequence of Vibrio parahaemolyticus: a pathogenic mechanism distinct from that of V. cholerae.</title>
        <authorList>
            <person name="Makino K."/>
            <person name="Oshima K."/>
            <person name="Kurokawa K."/>
            <person name="Yokoyama K."/>
            <person name="Uda T."/>
            <person name="Tagomori K."/>
            <person name="Iijima Y."/>
            <person name="Najima M."/>
            <person name="Nakano M."/>
            <person name="Yamashita A."/>
            <person name="Kubota Y."/>
            <person name="Kimura S."/>
            <person name="Yasunaga T."/>
            <person name="Honda T."/>
            <person name="Shinagawa H."/>
            <person name="Hattori M."/>
            <person name="Iida T."/>
        </authorList>
    </citation>
    <scope>NUCLEOTIDE SEQUENCE [LARGE SCALE GENOMIC DNA]</scope>
    <source>
        <strain>RIMD 2210633</strain>
    </source>
</reference>
<accession>Q87IH5</accession>
<name>CYOE2_VIBPA</name>
<evidence type="ECO:0000255" key="1">
    <source>
        <dbReference type="HAMAP-Rule" id="MF_00154"/>
    </source>
</evidence>